<accession>P47582</accession>
<accession>Q49292</accession>
<accession>Q49454</accession>
<accession>Q49483</accession>
<accession>Q49486</accession>
<reference key="1">
    <citation type="journal article" date="1995" name="Science">
        <title>The minimal gene complement of Mycoplasma genitalium.</title>
        <authorList>
            <person name="Fraser C.M."/>
            <person name="Gocayne J.D."/>
            <person name="White O."/>
            <person name="Adams M.D."/>
            <person name="Clayton R.A."/>
            <person name="Fleischmann R.D."/>
            <person name="Bult C.J."/>
            <person name="Kerlavage A.R."/>
            <person name="Sutton G.G."/>
            <person name="Kelley J.M."/>
            <person name="Fritchman J.L."/>
            <person name="Weidman J.F."/>
            <person name="Small K.V."/>
            <person name="Sandusky M."/>
            <person name="Fuhrmann J.L."/>
            <person name="Nguyen D.T."/>
            <person name="Utterback T.R."/>
            <person name="Saudek D.M."/>
            <person name="Phillips C.A."/>
            <person name="Merrick J.M."/>
            <person name="Tomb J.-F."/>
            <person name="Dougherty B.A."/>
            <person name="Bott K.F."/>
            <person name="Hu P.-C."/>
            <person name="Lucier T.S."/>
            <person name="Peterson S.N."/>
            <person name="Smith H.O."/>
            <person name="Hutchison C.A. III"/>
            <person name="Venter J.C."/>
        </authorList>
    </citation>
    <scope>NUCLEOTIDE SEQUENCE [LARGE SCALE GENOMIC DNA]</scope>
    <source>
        <strain>ATCC 33530 / DSM 19775 / NCTC 10195 / G37</strain>
    </source>
</reference>
<reference key="2">
    <citation type="journal article" date="1993" name="J. Bacteriol.">
        <title>A survey of the Mycoplasma genitalium genome by using random sequencing.</title>
        <authorList>
            <person name="Peterson S.N."/>
            <person name="Hu P.-C."/>
            <person name="Bott K.F."/>
            <person name="Hutchison C.A. III"/>
        </authorList>
    </citation>
    <scope>NUCLEOTIDE SEQUENCE [GENOMIC DNA] OF 23-142 AND 1029-1148</scope>
    <source>
        <strain>ATCC 33530 / DSM 19775 / NCTC 10195 / G37</strain>
    </source>
</reference>
<reference key="3">
    <citation type="journal article" date="1991" name="Nucleic Acids Res.">
        <title>A random sequencing approach for placing markers on the physical map of Mycoplasma genitalium.</title>
        <authorList>
            <person name="Peterson S.N."/>
            <person name="Schramm N."/>
            <person name="Hu P.-C."/>
            <person name="Bott K.F."/>
            <person name="Hutchison C.A. III"/>
        </authorList>
    </citation>
    <scope>NUCLEOTIDE SEQUENCE [GENOMIC DNA] OF 334-506</scope>
    <source>
        <strain>ATCC 33530 / DSM 19775 / NCTC 10195 / G37</strain>
    </source>
</reference>
<reference key="4">
    <citation type="journal article" date="2006" name="Proc. Natl. Acad. Sci. U.S.A.">
        <title>Essential genes of a minimal bacterium.</title>
        <authorList>
            <person name="Glass J.I."/>
            <person name="Assad-Garcia N."/>
            <person name="Alperovich N."/>
            <person name="Yooseph S."/>
            <person name="Lewis M.R."/>
            <person name="Maruf M."/>
            <person name="Hutchison C.A. III"/>
            <person name="Smith H.O."/>
            <person name="Venter J.C."/>
        </authorList>
    </citation>
    <scope>SEQUENCE REVISION TO 818</scope>
    <scope>DISRUPTION PHENOTYPE</scope>
    <source>
        <strain>ATCC 33530 / DSM 19775 / NCTC 10195 / G37</strain>
    </source>
</reference>
<organism>
    <name type="scientific">Mycoplasma genitalium (strain ATCC 33530 / DSM 19775 / NCTC 10195 / G37)</name>
    <name type="common">Mycoplasmoides genitalium</name>
    <dbReference type="NCBI Taxonomy" id="243273"/>
    <lineage>
        <taxon>Bacteria</taxon>
        <taxon>Bacillati</taxon>
        <taxon>Mycoplasmatota</taxon>
        <taxon>Mycoplasmoidales</taxon>
        <taxon>Mycoplasmoidaceae</taxon>
        <taxon>Mycoplasmoides</taxon>
    </lineage>
</organism>
<gene>
    <name evidence="1" type="primary">rpoC</name>
    <name type="ordered locus">MG340</name>
</gene>
<proteinExistence type="inferred from homology"/>
<sequence length="1292" mass="145705">MTTTRRNKRNNKLYKNIKAIKLSIASNDTILNWSEGEVTKAETINYKSLKPEPGGLFDEAIFGPVKDYECACGKFKKIKYRGVRCDRCGVWVTESIVRRERMGHIALVSPVAHIWMSKELPSPSKISLVLNISYKEVEQVLYFVNYIVLDTGKIKDDKIMPFKFKEVLDLTGKGSLSTRQKMRRVIGYIFRNLIKSKSSEDYRKGKIFYESLKNSSLPFSLNDAFNYIKKYTGFRVGIGAEAILELLNKIDLNLEFSRLNDALRKAKKDSVEDAKVKKILRQLETISWFRNSKLHPKNMILHTVPVIPPDIRPIIQLDGAKFTTSDINNFYRRVIIRNDRLRRILEDGTVPSIVVNNEKRLLQESVDALFDNSSRHKPSLSKDKRSLKSLTDRLKGKQGLFRHNLLGKRVDYSGRSVIVVGPELKMYEVGIPALMILKLFKPFIIHGLINKFDENGNEIRPIAASIRQAEDMIKNQDDLIWGIVYDVIKDRPVLLNRAPTLHRLGIQAFEPRIVDGKAIRLHPLVTTAFNADFDGDQMAVHVPLSENAVNEARAVLLASKHILGLKDGRPIVTPTQDMVLGNYYLTTERKGQLGEGIIFSTVYEARAAYESQKVHLHAIVGISTKAFPNKKFACQGTLITTVGKIIFNDVLGNNVPYINDGEFDENACPEKFIVKQGEDVRQSILKHQIIPAFSKKVISKLIDLLYLLLEFKDLPKTLDNIKALGFKYSTFSSTTVSVFDIPKYTNKQNYFDSADQQVLKYKQFYNKGLLTDDERYKRVVKLWNNVKEKVSDEIQNLIKQEQYRDNSIVVMADSGARCNISNFTQLFGMRGLMSKSFNYERNNQSKIIKDTIEVPIKHSFFEGLTINEYFNSSYGARKGMTDTAMKTAKSGYMTRKLVDATHELIINHDDCGTRKGIVVEAIVETKTKSLIESLFDRIVNRYSITPIVDPETQKTIVEANSLITTQLAKQICATSIKEVLVRSVIYCERENGICQYCFGIDLSTGKLVELGTAVGVIAAQSIGEPGTQLTMRTFHTGGVSTENNLAQGFERLKQIFEVVTPKDFEKAVISEVKGTVKSITTVQNAQEVVIKSNVDERIYTIPFSAQIRVHVGDQVSPGSKITEGSVDIKQLLRIAGIQRVRQYMIVEIQKVYRIQGIDIADKYVEIIIRQLTNLLQVTDAGNSNLFVGQLVHSHYLNELNKSLLLAGKMPVIAINQVFGIDEAASKSNSFLSAASFQDTKKILTDAAVKNQVDYLLGLKENVIIGGKIPAGTGFLTDEELTFLGSKTVAEEY</sequence>
<name>RPOC_MYCGE</name>
<evidence type="ECO:0000255" key="1">
    <source>
        <dbReference type="HAMAP-Rule" id="MF_01322"/>
    </source>
</evidence>
<evidence type="ECO:0000269" key="2">
    <source>
    </source>
</evidence>
<evidence type="ECO:0000305" key="3"/>
<dbReference type="EC" id="2.7.7.6" evidence="1"/>
<dbReference type="EMBL" id="L43967">
    <property type="protein sequence ID" value="AAC71565.2"/>
    <property type="molecule type" value="Genomic_DNA"/>
</dbReference>
<dbReference type="EMBL" id="U01797">
    <property type="protein sequence ID" value="AAD12323.1"/>
    <property type="molecule type" value="Genomic_DNA"/>
</dbReference>
<dbReference type="EMBL" id="U02169">
    <property type="protein sequence ID" value="AAD12451.1"/>
    <property type="molecule type" value="Genomic_DNA"/>
</dbReference>
<dbReference type="EMBL" id="X61528">
    <property type="protein sequence ID" value="CAB98132.1"/>
    <property type="molecule type" value="Genomic_DNA"/>
</dbReference>
<dbReference type="EMBL" id="X61534">
    <property type="protein sequence ID" value="CAA43746.1"/>
    <property type="status" value="ALT_FRAME"/>
    <property type="molecule type" value="Genomic_DNA"/>
</dbReference>
<dbReference type="PIR" id="F64237">
    <property type="entry name" value="F64237"/>
</dbReference>
<dbReference type="RefSeq" id="WP_010869441.1">
    <property type="nucleotide sequence ID" value="NC_000908.2"/>
</dbReference>
<dbReference type="SMR" id="P47582"/>
<dbReference type="FunCoup" id="P47582">
    <property type="interactions" value="182"/>
</dbReference>
<dbReference type="STRING" id="243273.MG_340"/>
<dbReference type="GeneID" id="88282517"/>
<dbReference type="KEGG" id="mge:MG_340"/>
<dbReference type="eggNOG" id="COG0086">
    <property type="taxonomic scope" value="Bacteria"/>
</dbReference>
<dbReference type="HOGENOM" id="CLU_000524_3_1_14"/>
<dbReference type="InParanoid" id="P47582"/>
<dbReference type="OrthoDB" id="9815296at2"/>
<dbReference type="BioCyc" id="MGEN243273:G1GJ2-427-MONOMER"/>
<dbReference type="Proteomes" id="UP000000807">
    <property type="component" value="Chromosome"/>
</dbReference>
<dbReference type="GO" id="GO:0000428">
    <property type="term" value="C:DNA-directed RNA polymerase complex"/>
    <property type="evidence" value="ECO:0007669"/>
    <property type="project" value="UniProtKB-KW"/>
</dbReference>
<dbReference type="GO" id="GO:0003677">
    <property type="term" value="F:DNA binding"/>
    <property type="evidence" value="ECO:0007669"/>
    <property type="project" value="UniProtKB-UniRule"/>
</dbReference>
<dbReference type="GO" id="GO:0003899">
    <property type="term" value="F:DNA-directed RNA polymerase activity"/>
    <property type="evidence" value="ECO:0007669"/>
    <property type="project" value="UniProtKB-UniRule"/>
</dbReference>
<dbReference type="GO" id="GO:0000287">
    <property type="term" value="F:magnesium ion binding"/>
    <property type="evidence" value="ECO:0007669"/>
    <property type="project" value="UniProtKB-UniRule"/>
</dbReference>
<dbReference type="GO" id="GO:0008270">
    <property type="term" value="F:zinc ion binding"/>
    <property type="evidence" value="ECO:0007669"/>
    <property type="project" value="UniProtKB-UniRule"/>
</dbReference>
<dbReference type="GO" id="GO:0006351">
    <property type="term" value="P:DNA-templated transcription"/>
    <property type="evidence" value="ECO:0007669"/>
    <property type="project" value="UniProtKB-UniRule"/>
</dbReference>
<dbReference type="CDD" id="cd02655">
    <property type="entry name" value="RNAP_beta'_C"/>
    <property type="match status" value="1"/>
</dbReference>
<dbReference type="CDD" id="cd01609">
    <property type="entry name" value="RNAP_beta'_N"/>
    <property type="match status" value="1"/>
</dbReference>
<dbReference type="Gene3D" id="1.10.132.30">
    <property type="match status" value="1"/>
</dbReference>
<dbReference type="Gene3D" id="1.10.150.390">
    <property type="match status" value="1"/>
</dbReference>
<dbReference type="Gene3D" id="1.10.1790.20">
    <property type="match status" value="1"/>
</dbReference>
<dbReference type="Gene3D" id="1.10.40.90">
    <property type="match status" value="1"/>
</dbReference>
<dbReference type="Gene3D" id="2.40.40.20">
    <property type="match status" value="1"/>
</dbReference>
<dbReference type="Gene3D" id="2.40.50.100">
    <property type="match status" value="1"/>
</dbReference>
<dbReference type="Gene3D" id="4.10.860.120">
    <property type="entry name" value="RNA polymerase II, clamp domain"/>
    <property type="match status" value="1"/>
</dbReference>
<dbReference type="Gene3D" id="1.10.274.100">
    <property type="entry name" value="RNA polymerase Rpb1, domain 3"/>
    <property type="match status" value="1"/>
</dbReference>
<dbReference type="HAMAP" id="MF_01322">
    <property type="entry name" value="RNApol_bact_RpoC"/>
    <property type="match status" value="1"/>
</dbReference>
<dbReference type="InterPro" id="IPR045867">
    <property type="entry name" value="DNA-dir_RpoC_beta_prime"/>
</dbReference>
<dbReference type="InterPro" id="IPR012754">
    <property type="entry name" value="DNA-dir_RpoC_beta_prime_bact"/>
</dbReference>
<dbReference type="InterPro" id="IPR000722">
    <property type="entry name" value="RNA_pol_asu"/>
</dbReference>
<dbReference type="InterPro" id="IPR006592">
    <property type="entry name" value="RNA_pol_N"/>
</dbReference>
<dbReference type="InterPro" id="IPR007080">
    <property type="entry name" value="RNA_pol_Rpb1_1"/>
</dbReference>
<dbReference type="InterPro" id="IPR007066">
    <property type="entry name" value="RNA_pol_Rpb1_3"/>
</dbReference>
<dbReference type="InterPro" id="IPR042102">
    <property type="entry name" value="RNA_pol_Rpb1_3_sf"/>
</dbReference>
<dbReference type="InterPro" id="IPR007083">
    <property type="entry name" value="RNA_pol_Rpb1_4"/>
</dbReference>
<dbReference type="InterPro" id="IPR007081">
    <property type="entry name" value="RNA_pol_Rpb1_5"/>
</dbReference>
<dbReference type="InterPro" id="IPR044893">
    <property type="entry name" value="RNA_pol_Rpb1_clamp_domain"/>
</dbReference>
<dbReference type="InterPro" id="IPR038120">
    <property type="entry name" value="Rpb1_funnel_sf"/>
</dbReference>
<dbReference type="NCBIfam" id="TIGR02386">
    <property type="entry name" value="rpoC_TIGR"/>
    <property type="match status" value="1"/>
</dbReference>
<dbReference type="PANTHER" id="PTHR19376">
    <property type="entry name" value="DNA-DIRECTED RNA POLYMERASE"/>
    <property type="match status" value="1"/>
</dbReference>
<dbReference type="PANTHER" id="PTHR19376:SF54">
    <property type="entry name" value="DNA-DIRECTED RNA POLYMERASE SUBUNIT BETA"/>
    <property type="match status" value="1"/>
</dbReference>
<dbReference type="Pfam" id="PF04997">
    <property type="entry name" value="RNA_pol_Rpb1_1"/>
    <property type="match status" value="1"/>
</dbReference>
<dbReference type="Pfam" id="PF00623">
    <property type="entry name" value="RNA_pol_Rpb1_2"/>
    <property type="match status" value="1"/>
</dbReference>
<dbReference type="Pfam" id="PF04983">
    <property type="entry name" value="RNA_pol_Rpb1_3"/>
    <property type="match status" value="1"/>
</dbReference>
<dbReference type="Pfam" id="PF05000">
    <property type="entry name" value="RNA_pol_Rpb1_4"/>
    <property type="match status" value="1"/>
</dbReference>
<dbReference type="Pfam" id="PF04998">
    <property type="entry name" value="RNA_pol_Rpb1_5"/>
    <property type="match status" value="1"/>
</dbReference>
<dbReference type="SMART" id="SM00663">
    <property type="entry name" value="RPOLA_N"/>
    <property type="match status" value="1"/>
</dbReference>
<dbReference type="SUPFAM" id="SSF64484">
    <property type="entry name" value="beta and beta-prime subunits of DNA dependent RNA-polymerase"/>
    <property type="match status" value="1"/>
</dbReference>
<comment type="function">
    <text evidence="1">DNA-dependent RNA polymerase catalyzes the transcription of DNA into RNA using the four ribonucleoside triphosphates as substrates.</text>
</comment>
<comment type="catalytic activity">
    <reaction evidence="1">
        <text>RNA(n) + a ribonucleoside 5'-triphosphate = RNA(n+1) + diphosphate</text>
        <dbReference type="Rhea" id="RHEA:21248"/>
        <dbReference type="Rhea" id="RHEA-COMP:14527"/>
        <dbReference type="Rhea" id="RHEA-COMP:17342"/>
        <dbReference type="ChEBI" id="CHEBI:33019"/>
        <dbReference type="ChEBI" id="CHEBI:61557"/>
        <dbReference type="ChEBI" id="CHEBI:140395"/>
        <dbReference type="EC" id="2.7.7.6"/>
    </reaction>
</comment>
<comment type="cofactor">
    <cofactor evidence="1">
        <name>Mg(2+)</name>
        <dbReference type="ChEBI" id="CHEBI:18420"/>
    </cofactor>
    <text evidence="1">Binds 1 Mg(2+) ion per subunit.</text>
</comment>
<comment type="cofactor">
    <cofactor evidence="1">
        <name>Zn(2+)</name>
        <dbReference type="ChEBI" id="CHEBI:29105"/>
    </cofactor>
    <text evidence="1">Binds 2 Zn(2+) ions per subunit.</text>
</comment>
<comment type="subunit">
    <text evidence="1">The RNAP catalytic core consists of 2 alpha, 1 beta, 1 beta' and 1 omega subunit. When a sigma factor is associated with the core the holoenzyme is formed, which can initiate transcription.</text>
</comment>
<comment type="disruption phenotype">
    <text evidence="2">Probably essential, it was not disrupted in a global transposon mutagenesis study.</text>
</comment>
<comment type="similarity">
    <text evidence="1">Belongs to the RNA polymerase beta' chain family.</text>
</comment>
<comment type="sequence caution" evidence="3">
    <conflict type="frameshift">
        <sequence resource="EMBL-CDS" id="CAA43746"/>
    </conflict>
</comment>
<protein>
    <recommendedName>
        <fullName evidence="1">DNA-directed RNA polymerase subunit beta'</fullName>
        <shortName evidence="1">RNAP subunit beta'</shortName>
        <ecNumber evidence="1">2.7.7.6</ecNumber>
    </recommendedName>
    <alternativeName>
        <fullName evidence="1">RNA polymerase subunit beta'</fullName>
    </alternativeName>
    <alternativeName>
        <fullName evidence="1">Transcriptase subunit beta'</fullName>
    </alternativeName>
</protein>
<feature type="chain" id="PRO_0000067759" description="DNA-directed RNA polymerase subunit beta'">
    <location>
        <begin position="1"/>
        <end position="1292"/>
    </location>
</feature>
<feature type="binding site" evidence="1">
    <location>
        <position position="70"/>
    </location>
    <ligand>
        <name>Zn(2+)</name>
        <dbReference type="ChEBI" id="CHEBI:29105"/>
        <label>1</label>
    </ligand>
</feature>
<feature type="binding site" evidence="1">
    <location>
        <position position="72"/>
    </location>
    <ligand>
        <name>Zn(2+)</name>
        <dbReference type="ChEBI" id="CHEBI:29105"/>
        <label>1</label>
    </ligand>
</feature>
<feature type="binding site" evidence="1">
    <location>
        <position position="85"/>
    </location>
    <ligand>
        <name>Zn(2+)</name>
        <dbReference type="ChEBI" id="CHEBI:29105"/>
        <label>1</label>
    </ligand>
</feature>
<feature type="binding site" evidence="1">
    <location>
        <position position="88"/>
    </location>
    <ligand>
        <name>Zn(2+)</name>
        <dbReference type="ChEBI" id="CHEBI:29105"/>
        <label>1</label>
    </ligand>
</feature>
<feature type="binding site" evidence="1">
    <location>
        <position position="532"/>
    </location>
    <ligand>
        <name>Mg(2+)</name>
        <dbReference type="ChEBI" id="CHEBI:18420"/>
    </ligand>
</feature>
<feature type="binding site" evidence="1">
    <location>
        <position position="534"/>
    </location>
    <ligand>
        <name>Mg(2+)</name>
        <dbReference type="ChEBI" id="CHEBI:18420"/>
    </ligand>
</feature>
<feature type="binding site" evidence="1">
    <location>
        <position position="536"/>
    </location>
    <ligand>
        <name>Mg(2+)</name>
        <dbReference type="ChEBI" id="CHEBI:18420"/>
    </ligand>
</feature>
<feature type="binding site" evidence="1">
    <location>
        <position position="911"/>
    </location>
    <ligand>
        <name>Zn(2+)</name>
        <dbReference type="ChEBI" id="CHEBI:29105"/>
        <label>2</label>
    </ligand>
</feature>
<feature type="binding site" evidence="1">
    <location>
        <position position="987"/>
    </location>
    <ligand>
        <name>Zn(2+)</name>
        <dbReference type="ChEBI" id="CHEBI:29105"/>
        <label>2</label>
    </ligand>
</feature>
<feature type="binding site" evidence="1">
    <location>
        <position position="994"/>
    </location>
    <ligand>
        <name>Zn(2+)</name>
        <dbReference type="ChEBI" id="CHEBI:29105"/>
        <label>2</label>
    </ligand>
</feature>
<feature type="binding site" evidence="1">
    <location>
        <position position="997"/>
    </location>
    <ligand>
        <name>Zn(2+)</name>
        <dbReference type="ChEBI" id="CHEBI:29105"/>
        <label>2</label>
    </ligand>
</feature>
<feature type="sequence conflict" description="In Ref. 2; AAD12323." evidence="3" ref="2">
    <original>WSEG</original>
    <variation>LIWR</variation>
    <location>
        <begin position="33"/>
        <end position="36"/>
    </location>
</feature>
<feature type="sequence conflict" description="In Ref. 3; CAA43746." evidence="3" ref="3">
    <original>NDRLRRI</original>
    <variation>KWPIKKD</variation>
    <location>
        <begin position="338"/>
        <end position="344"/>
    </location>
</feature>
<feature type="sequence conflict" description="In Ref. 2; AAD12451." evidence="3" ref="2">
    <original>LTMRTFHTG</original>
    <variation>MDNAYFPYW</variation>
    <location>
        <begin position="1029"/>
        <end position="1037"/>
    </location>
</feature>
<keyword id="KW-0240">DNA-directed RNA polymerase</keyword>
<keyword id="KW-0460">Magnesium</keyword>
<keyword id="KW-0479">Metal-binding</keyword>
<keyword id="KW-0548">Nucleotidyltransferase</keyword>
<keyword id="KW-1185">Reference proteome</keyword>
<keyword id="KW-0804">Transcription</keyword>
<keyword id="KW-0808">Transferase</keyword>
<keyword id="KW-0862">Zinc</keyword>